<gene>
    <name type="primary">lktB</name>
</gene>
<reference key="1">
    <citation type="journal article" date="1993" name="Infect. Immun.">
        <title>Molecular characterization of a leukotoxin gene from a Pasteurella haemolytica-like organism, encoding a new member of the RTX toxin family.</title>
        <authorList>
            <person name="Chang Y.-F."/>
            <person name="Ma D.-P."/>
            <person name="Shi J."/>
            <person name="Chengappa M.M."/>
        </authorList>
    </citation>
    <scope>NUCLEOTIDE SEQUENCE [GENOMIC DNA]</scope>
</reference>
<name>LKTB_PASSP</name>
<dbReference type="EC" id="7.4.2.5"/>
<dbReference type="EMBL" id="L12148">
    <property type="protein sequence ID" value="AAA16445.1"/>
    <property type="molecule type" value="Genomic_DNA"/>
</dbReference>
<dbReference type="SMR" id="P55122"/>
<dbReference type="GO" id="GO:0005886">
    <property type="term" value="C:plasma membrane"/>
    <property type="evidence" value="ECO:0007669"/>
    <property type="project" value="UniProtKB-SubCell"/>
</dbReference>
<dbReference type="GO" id="GO:0030256">
    <property type="term" value="C:type I protein secretion system complex"/>
    <property type="evidence" value="ECO:0007669"/>
    <property type="project" value="InterPro"/>
</dbReference>
<dbReference type="GO" id="GO:0140359">
    <property type="term" value="F:ABC-type transporter activity"/>
    <property type="evidence" value="ECO:0007669"/>
    <property type="project" value="InterPro"/>
</dbReference>
<dbReference type="GO" id="GO:0005524">
    <property type="term" value="F:ATP binding"/>
    <property type="evidence" value="ECO:0007669"/>
    <property type="project" value="UniProtKB-KW"/>
</dbReference>
<dbReference type="GO" id="GO:0016887">
    <property type="term" value="F:ATP hydrolysis activity"/>
    <property type="evidence" value="ECO:0007669"/>
    <property type="project" value="InterPro"/>
</dbReference>
<dbReference type="GO" id="GO:0034040">
    <property type="term" value="F:ATPase-coupled lipid transmembrane transporter activity"/>
    <property type="evidence" value="ECO:0007669"/>
    <property type="project" value="TreeGrafter"/>
</dbReference>
<dbReference type="GO" id="GO:0030253">
    <property type="term" value="P:protein secretion by the type I secretion system"/>
    <property type="evidence" value="ECO:0007669"/>
    <property type="project" value="InterPro"/>
</dbReference>
<dbReference type="GO" id="GO:0006508">
    <property type="term" value="P:proteolysis"/>
    <property type="evidence" value="ECO:0007669"/>
    <property type="project" value="InterPro"/>
</dbReference>
<dbReference type="CDD" id="cd18588">
    <property type="entry name" value="ABC_6TM_CyaB_HlyB_like"/>
    <property type="match status" value="1"/>
</dbReference>
<dbReference type="CDD" id="cd03252">
    <property type="entry name" value="ABCC_Hemolysin"/>
    <property type="match status" value="1"/>
</dbReference>
<dbReference type="CDD" id="cd02417">
    <property type="entry name" value="Peptidase_C39_likeA"/>
    <property type="match status" value="1"/>
</dbReference>
<dbReference type="FunFam" id="3.40.50.300:FF:000299">
    <property type="entry name" value="ABC transporter ATP-binding protein/permease"/>
    <property type="match status" value="1"/>
</dbReference>
<dbReference type="FunFam" id="1.20.1560.10:FF:000056">
    <property type="entry name" value="Alpha-hemolysin translocation ATP-binding protein HlyB"/>
    <property type="match status" value="1"/>
</dbReference>
<dbReference type="Gene3D" id="1.20.1560.10">
    <property type="entry name" value="ABC transporter type 1, transmembrane domain"/>
    <property type="match status" value="1"/>
</dbReference>
<dbReference type="Gene3D" id="3.90.70.10">
    <property type="entry name" value="Cysteine proteinases"/>
    <property type="match status" value="1"/>
</dbReference>
<dbReference type="Gene3D" id="3.40.50.300">
    <property type="entry name" value="P-loop containing nucleotide triphosphate hydrolases"/>
    <property type="match status" value="1"/>
</dbReference>
<dbReference type="InterPro" id="IPR003593">
    <property type="entry name" value="AAA+_ATPase"/>
</dbReference>
<dbReference type="InterPro" id="IPR011527">
    <property type="entry name" value="ABC1_TM_dom"/>
</dbReference>
<dbReference type="InterPro" id="IPR036640">
    <property type="entry name" value="ABC1_TM_sf"/>
</dbReference>
<dbReference type="InterPro" id="IPR003439">
    <property type="entry name" value="ABC_transporter-like_ATP-bd"/>
</dbReference>
<dbReference type="InterPro" id="IPR017871">
    <property type="entry name" value="ABC_transporter-like_CS"/>
</dbReference>
<dbReference type="InterPro" id="IPR010132">
    <property type="entry name" value="ATPase_T1SS_HlyB"/>
</dbReference>
<dbReference type="InterPro" id="IPR027417">
    <property type="entry name" value="P-loop_NTPase"/>
</dbReference>
<dbReference type="InterPro" id="IPR005074">
    <property type="entry name" value="Peptidase_C39"/>
</dbReference>
<dbReference type="InterPro" id="IPR039395">
    <property type="entry name" value="Peptidase_C39-like_A"/>
</dbReference>
<dbReference type="InterPro" id="IPR039421">
    <property type="entry name" value="Type_1_exporter"/>
</dbReference>
<dbReference type="NCBIfam" id="TIGR01846">
    <property type="entry name" value="type_I_sec_HlyB"/>
    <property type="match status" value="1"/>
</dbReference>
<dbReference type="PANTHER" id="PTHR24221">
    <property type="entry name" value="ATP-BINDING CASSETTE SUB-FAMILY B"/>
    <property type="match status" value="1"/>
</dbReference>
<dbReference type="PANTHER" id="PTHR24221:SF647">
    <property type="entry name" value="BLL6336 PROTEIN"/>
    <property type="match status" value="1"/>
</dbReference>
<dbReference type="Pfam" id="PF00664">
    <property type="entry name" value="ABC_membrane"/>
    <property type="match status" value="1"/>
</dbReference>
<dbReference type="Pfam" id="PF00005">
    <property type="entry name" value="ABC_tran"/>
    <property type="match status" value="1"/>
</dbReference>
<dbReference type="Pfam" id="PF03412">
    <property type="entry name" value="Peptidase_C39"/>
    <property type="match status" value="1"/>
</dbReference>
<dbReference type="SMART" id="SM00382">
    <property type="entry name" value="AAA"/>
    <property type="match status" value="1"/>
</dbReference>
<dbReference type="SUPFAM" id="SSF90123">
    <property type="entry name" value="ABC transporter transmembrane region"/>
    <property type="match status" value="1"/>
</dbReference>
<dbReference type="SUPFAM" id="SSF52540">
    <property type="entry name" value="P-loop containing nucleoside triphosphate hydrolases"/>
    <property type="match status" value="1"/>
</dbReference>
<dbReference type="PROSITE" id="PS50929">
    <property type="entry name" value="ABC_TM1F"/>
    <property type="match status" value="1"/>
</dbReference>
<dbReference type="PROSITE" id="PS00211">
    <property type="entry name" value="ABC_TRANSPORTER_1"/>
    <property type="match status" value="1"/>
</dbReference>
<dbReference type="PROSITE" id="PS50893">
    <property type="entry name" value="ABC_TRANSPORTER_2"/>
    <property type="match status" value="1"/>
</dbReference>
<dbReference type="PROSITE" id="PS50990">
    <property type="entry name" value="PEPTIDASE_C39"/>
    <property type="match status" value="1"/>
</dbReference>
<feature type="chain" id="PRO_0000092387" description="Leukotoxin translocation ATP-binding protein LktB">
    <location>
        <begin position="1"/>
        <end position="708"/>
    </location>
</feature>
<feature type="transmembrane region" description="Helical" evidence="4">
    <location>
        <begin position="159"/>
        <end position="179"/>
    </location>
</feature>
<feature type="transmembrane region" description="Helical" evidence="4">
    <location>
        <begin position="192"/>
        <end position="212"/>
    </location>
</feature>
<feature type="transmembrane region" description="Helical" evidence="4">
    <location>
        <begin position="270"/>
        <end position="290"/>
    </location>
</feature>
<feature type="transmembrane region" description="Helical" evidence="4">
    <location>
        <begin position="296"/>
        <end position="316"/>
    </location>
</feature>
<feature type="transmembrane region" description="Helical" evidence="4">
    <location>
        <begin position="389"/>
        <end position="409"/>
    </location>
</feature>
<feature type="domain" description="Peptidase C39" evidence="2">
    <location>
        <begin position="1"/>
        <end position="126"/>
    </location>
</feature>
<feature type="domain" description="ABC transmembrane type-1" evidence="4">
    <location>
        <begin position="155"/>
        <end position="437"/>
    </location>
</feature>
<feature type="domain" description="ABC transporter" evidence="2 3">
    <location>
        <begin position="469"/>
        <end position="704"/>
    </location>
</feature>
<feature type="binding site" evidence="2 3">
    <location>
        <begin position="503"/>
        <end position="510"/>
    </location>
    <ligand>
        <name>ATP</name>
        <dbReference type="ChEBI" id="CHEBI:30616"/>
    </ligand>
</feature>
<evidence type="ECO:0000250" key="1"/>
<evidence type="ECO:0000255" key="2">
    <source>
        <dbReference type="PROSITE-ProRule" id="PRU00362"/>
    </source>
</evidence>
<evidence type="ECO:0000255" key="3">
    <source>
        <dbReference type="PROSITE-ProRule" id="PRU00434"/>
    </source>
</evidence>
<evidence type="ECO:0000255" key="4">
    <source>
        <dbReference type="PROSITE-ProRule" id="PRU00441"/>
    </source>
</evidence>
<evidence type="ECO:0000305" key="5"/>
<accession>P55122</accession>
<comment type="function">
    <text evidence="5">Part of the ABC transporter complex LktBD involved in leukotoxin export. Transmembrane domains (TMD) form a pore in the inner membrane and the ATP-binding domain (NBD) is responsible for energy generation (Probable).</text>
</comment>
<comment type="catalytic activity">
    <reaction>
        <text>ATP + H2O + proteinSide 1 = ADP + phosphate + proteinSide 2.</text>
        <dbReference type="EC" id="7.4.2.5"/>
    </reaction>
</comment>
<comment type="subunit">
    <text evidence="1">Homodimer.</text>
</comment>
<comment type="subcellular location">
    <subcellularLocation>
        <location evidence="5">Cell inner membrane</location>
        <topology evidence="5">Multi-pass membrane protein</topology>
    </subcellularLocation>
</comment>
<comment type="domain">
    <text>In LktB the peptidase C39 domain, the ATP-binding domain (NBD) and the transmembrane domain (TMD) are fused.</text>
</comment>
<comment type="similarity">
    <text evidence="5">Belongs to the ABC transporter superfamily. Protein-1 exporter (TC 3.A.1.109) family.</text>
</comment>
<comment type="caution">
    <text evidence="5">Leu-10 is present instead of the conserved Cys which is expected to be the active site residue of peptidase C39. Thus this protein is presumed to be without peptidase activity.</text>
</comment>
<keyword id="KW-0067">ATP-binding</keyword>
<keyword id="KW-0997">Cell inner membrane</keyword>
<keyword id="KW-1003">Cell membrane</keyword>
<keyword id="KW-0472">Membrane</keyword>
<keyword id="KW-0547">Nucleotide-binding</keyword>
<keyword id="KW-1278">Translocase</keyword>
<keyword id="KW-0812">Transmembrane</keyword>
<keyword id="KW-1133">Transmembrane helix</keyword>
<keyword id="KW-0813">Transport</keyword>
<protein>
    <recommendedName>
        <fullName>Leukotoxin translocation ATP-binding protein LktB</fullName>
        <ecNumber>7.4.2.5</ecNumber>
    </recommendedName>
</protein>
<sequence length="708" mass="79772">MEVNHQSNDLGLVALKMLAQYHNIPLNPEEIKHKFDIEGKGLTLTSWLLAAKSLELKAKHIKKEISRLHLVNLPALVWQDNGKHFLLVKIDTDKKRYLTYNLEQDAPKILSQEEFESCYQGKIILVTSRASIVGQLAKFDFTWFIPAVIKYRKIFLETLLVSIFLQIFALITPLFFQVVMDKVLVHRGFSTLNIITVALAIVIIFEIVLSGLRTYIFAHSTSRIDVELGARLFRHLLALPISYFENRRVGDTVARVRELDQIRNFLTGQALTSVLDLLFSFIFFAVMWYYSPKLTLVILGSLPCYILWSIFISPILRRRLDDKFARGADNQAFLVESVTAINMIKAMAVSPQMTDTWDKQLASYVSSSFRVTVLATIGQQGVQLIQKTVMVINLWLGAHLVISGDLSIGQLIAFNMLSGQVIAPVIRLAQLWQDFTQVGISVTRLGDVLNSPTEQYQGKLSLPEIQGDIAFKNIRFRYKPDAPTILNNVNLEIKKGEVIGIVGRSGSGKSTLTKLLQRFYIPENGQVLIDGHDLALADPNWLRRQIGVVLQDNVLLNRSIRENIALSEPGMSMERVIYAAKLAGAHDFISDVREGYNTIVGEQGAGLSGGQRQRIAIARALVNNPKILIFDEATSALDYESEHIIMQNMQKICQGRTVILIAHRLSTVKNADRIIVMEKGEIVEQGKHNELLQNNNGLYSYLHQLQLN</sequence>
<organism>
    <name type="scientific">Pasteurella haemolytica-like sp. (strain 5943B)</name>
    <dbReference type="NCBI Taxonomy" id="53500"/>
    <lineage>
        <taxon>Bacteria</taxon>
        <taxon>Pseudomonadati</taxon>
        <taxon>Pseudomonadota</taxon>
        <taxon>Gammaproteobacteria</taxon>
        <taxon>Pasteurellales</taxon>
        <taxon>Pasteurellaceae</taxon>
        <taxon>Mannheimia</taxon>
    </lineage>
</organism>
<proteinExistence type="inferred from homology"/>